<reference key="1">
    <citation type="journal article" date="2006" name="PLoS Genet.">
        <title>The complete genome sequence and comparative genome analysis of the high pathogenicity Yersinia enterocolitica strain 8081.</title>
        <authorList>
            <person name="Thomson N.R."/>
            <person name="Howard S."/>
            <person name="Wren B.W."/>
            <person name="Holden M.T.G."/>
            <person name="Crossman L."/>
            <person name="Challis G.L."/>
            <person name="Churcher C."/>
            <person name="Mungall K."/>
            <person name="Brooks K."/>
            <person name="Chillingworth T."/>
            <person name="Feltwell T."/>
            <person name="Abdellah Z."/>
            <person name="Hauser H."/>
            <person name="Jagels K."/>
            <person name="Maddison M."/>
            <person name="Moule S."/>
            <person name="Sanders M."/>
            <person name="Whitehead S."/>
            <person name="Quail M.A."/>
            <person name="Dougan G."/>
            <person name="Parkhill J."/>
            <person name="Prentice M.B."/>
        </authorList>
    </citation>
    <scope>NUCLEOTIDE SEQUENCE [LARGE SCALE GENOMIC DNA]</scope>
    <source>
        <strain>NCTC 13174 / 8081</strain>
    </source>
</reference>
<sequence length="520" mass="57354">MSQQVIIFDTTLRDGEQALQASLSVKEKLQIALALERMGVDVMEVGFPVSSPGDFESVRTIAQQMKNSRVCALARCVDKDIDVAAEALRIAEAFRIHVFLATSTLHIESKLKRSFDDVLAMAVHSVKRARNYTDDVEFSCEDAGRTPIDNLCRIVEAAINAGATTINIPDTVGYTTPYQFGGIITDLYQRVPNIDKAIISVHCHDDLGMSVANSITAVQAGARQVEGTINGLGERAGNCSLEEVIMAIKVRENMLGVHTNINHQEIYRTSQLVSKLCNMPIPANKAIVGSNAFAHSSGIHQDGVLKNRENYEIMTPQSIGLKEVQLNLTSRSGRAAVKHRMEEMGYQDKDYNLDSLYDAFLKLADKKGQVFDYDLEALAFINKQQEEPEHYRLDYFSVQSGSSVMATASVKLVCGEEIKSEAATGNGPVDAVYQAINRITDYPIELVKYQLSANGQGKDALGQVDIVVDHKGRRFHGVGLATDIVESSAKALVHVLNNIWRAHQVEIEKQRLQQNNQEMV</sequence>
<comment type="function">
    <text evidence="1">Catalyzes the condensation of the acetyl group of acetyl-CoA with 3-methyl-2-oxobutanoate (2-ketoisovalerate) to form 3-carboxy-3-hydroxy-4-methylpentanoate (2-isopropylmalate).</text>
</comment>
<comment type="catalytic activity">
    <reaction evidence="1">
        <text>3-methyl-2-oxobutanoate + acetyl-CoA + H2O = (2S)-2-isopropylmalate + CoA + H(+)</text>
        <dbReference type="Rhea" id="RHEA:21524"/>
        <dbReference type="ChEBI" id="CHEBI:1178"/>
        <dbReference type="ChEBI" id="CHEBI:11851"/>
        <dbReference type="ChEBI" id="CHEBI:15377"/>
        <dbReference type="ChEBI" id="CHEBI:15378"/>
        <dbReference type="ChEBI" id="CHEBI:57287"/>
        <dbReference type="ChEBI" id="CHEBI:57288"/>
        <dbReference type="EC" id="2.3.3.13"/>
    </reaction>
</comment>
<comment type="cofactor">
    <cofactor evidence="1">
        <name>Mn(2+)</name>
        <dbReference type="ChEBI" id="CHEBI:29035"/>
    </cofactor>
</comment>
<comment type="pathway">
    <text evidence="1">Amino-acid biosynthesis; L-leucine biosynthesis; L-leucine from 3-methyl-2-oxobutanoate: step 1/4.</text>
</comment>
<comment type="subunit">
    <text evidence="1">Homodimer.</text>
</comment>
<comment type="subcellular location">
    <subcellularLocation>
        <location evidence="1">Cytoplasm</location>
    </subcellularLocation>
</comment>
<comment type="similarity">
    <text evidence="1">Belongs to the alpha-IPM synthase/homocitrate synthase family. LeuA type 1 subfamily.</text>
</comment>
<name>LEU1_YERE8</name>
<keyword id="KW-0028">Amino-acid biosynthesis</keyword>
<keyword id="KW-0100">Branched-chain amino acid biosynthesis</keyword>
<keyword id="KW-0963">Cytoplasm</keyword>
<keyword id="KW-0432">Leucine biosynthesis</keyword>
<keyword id="KW-0464">Manganese</keyword>
<keyword id="KW-0479">Metal-binding</keyword>
<keyword id="KW-0808">Transferase</keyword>
<protein>
    <recommendedName>
        <fullName evidence="1">2-isopropylmalate synthase</fullName>
        <ecNumber evidence="1">2.3.3.13</ecNumber>
    </recommendedName>
    <alternativeName>
        <fullName evidence="1">Alpha-IPM synthase</fullName>
    </alternativeName>
    <alternativeName>
        <fullName evidence="1">Alpha-isopropylmalate synthase</fullName>
    </alternativeName>
</protein>
<accession>A1JJH7</accession>
<evidence type="ECO:0000255" key="1">
    <source>
        <dbReference type="HAMAP-Rule" id="MF_01025"/>
    </source>
</evidence>
<dbReference type="EC" id="2.3.3.13" evidence="1"/>
<dbReference type="EMBL" id="AM286415">
    <property type="protein sequence ID" value="CAL10765.1"/>
    <property type="molecule type" value="Genomic_DNA"/>
</dbReference>
<dbReference type="RefSeq" id="WP_011815560.1">
    <property type="nucleotide sequence ID" value="NC_008800.1"/>
</dbReference>
<dbReference type="RefSeq" id="YP_001005005.1">
    <property type="nucleotide sequence ID" value="NC_008800.1"/>
</dbReference>
<dbReference type="SMR" id="A1JJH7"/>
<dbReference type="KEGG" id="yen:YE0654"/>
<dbReference type="PATRIC" id="fig|393305.7.peg.748"/>
<dbReference type="eggNOG" id="COG0119">
    <property type="taxonomic scope" value="Bacteria"/>
</dbReference>
<dbReference type="HOGENOM" id="CLU_022158_0_1_6"/>
<dbReference type="OrthoDB" id="9803573at2"/>
<dbReference type="UniPathway" id="UPA00048">
    <property type="reaction ID" value="UER00070"/>
</dbReference>
<dbReference type="Proteomes" id="UP000000642">
    <property type="component" value="Chromosome"/>
</dbReference>
<dbReference type="GO" id="GO:0005829">
    <property type="term" value="C:cytosol"/>
    <property type="evidence" value="ECO:0007669"/>
    <property type="project" value="TreeGrafter"/>
</dbReference>
<dbReference type="GO" id="GO:0003852">
    <property type="term" value="F:2-isopropylmalate synthase activity"/>
    <property type="evidence" value="ECO:0007669"/>
    <property type="project" value="UniProtKB-UniRule"/>
</dbReference>
<dbReference type="GO" id="GO:0003985">
    <property type="term" value="F:acetyl-CoA C-acetyltransferase activity"/>
    <property type="evidence" value="ECO:0007669"/>
    <property type="project" value="UniProtKB-UniRule"/>
</dbReference>
<dbReference type="GO" id="GO:0030145">
    <property type="term" value="F:manganese ion binding"/>
    <property type="evidence" value="ECO:0007669"/>
    <property type="project" value="UniProtKB-UniRule"/>
</dbReference>
<dbReference type="GO" id="GO:0009098">
    <property type="term" value="P:L-leucine biosynthetic process"/>
    <property type="evidence" value="ECO:0007669"/>
    <property type="project" value="UniProtKB-UniRule"/>
</dbReference>
<dbReference type="CDD" id="cd07940">
    <property type="entry name" value="DRE_TIM_IPMS"/>
    <property type="match status" value="1"/>
</dbReference>
<dbReference type="FunFam" id="1.10.238.260:FF:000001">
    <property type="entry name" value="2-isopropylmalate synthase"/>
    <property type="match status" value="1"/>
</dbReference>
<dbReference type="FunFam" id="3.20.20.70:FF:000010">
    <property type="entry name" value="2-isopropylmalate synthase"/>
    <property type="match status" value="1"/>
</dbReference>
<dbReference type="FunFam" id="3.30.160.270:FF:000001">
    <property type="entry name" value="2-isopropylmalate synthase"/>
    <property type="match status" value="1"/>
</dbReference>
<dbReference type="Gene3D" id="1.10.238.260">
    <property type="match status" value="1"/>
</dbReference>
<dbReference type="Gene3D" id="3.30.160.270">
    <property type="match status" value="1"/>
</dbReference>
<dbReference type="Gene3D" id="3.20.20.70">
    <property type="entry name" value="Aldolase class I"/>
    <property type="match status" value="1"/>
</dbReference>
<dbReference type="HAMAP" id="MF_01025">
    <property type="entry name" value="LeuA_type1"/>
    <property type="match status" value="1"/>
</dbReference>
<dbReference type="InterPro" id="IPR050073">
    <property type="entry name" value="2-IPM_HCS-like"/>
</dbReference>
<dbReference type="InterPro" id="IPR013709">
    <property type="entry name" value="2-isopropylmalate_synth_dimer"/>
</dbReference>
<dbReference type="InterPro" id="IPR002034">
    <property type="entry name" value="AIPM/Hcit_synth_CS"/>
</dbReference>
<dbReference type="InterPro" id="IPR013785">
    <property type="entry name" value="Aldolase_TIM"/>
</dbReference>
<dbReference type="InterPro" id="IPR054691">
    <property type="entry name" value="LeuA/HCS_post-cat"/>
</dbReference>
<dbReference type="InterPro" id="IPR036230">
    <property type="entry name" value="LeuA_allosteric_dom_sf"/>
</dbReference>
<dbReference type="InterPro" id="IPR005671">
    <property type="entry name" value="LeuA_bact_synth"/>
</dbReference>
<dbReference type="InterPro" id="IPR000891">
    <property type="entry name" value="PYR_CT"/>
</dbReference>
<dbReference type="NCBIfam" id="TIGR00973">
    <property type="entry name" value="leuA_bact"/>
    <property type="match status" value="1"/>
</dbReference>
<dbReference type="NCBIfam" id="NF002084">
    <property type="entry name" value="PRK00915.1-1"/>
    <property type="match status" value="1"/>
</dbReference>
<dbReference type="NCBIfam" id="NF002086">
    <property type="entry name" value="PRK00915.1-3"/>
    <property type="match status" value="1"/>
</dbReference>
<dbReference type="PANTHER" id="PTHR10277:SF9">
    <property type="entry name" value="2-ISOPROPYLMALATE SYNTHASE 1, CHLOROPLASTIC-RELATED"/>
    <property type="match status" value="1"/>
</dbReference>
<dbReference type="PANTHER" id="PTHR10277">
    <property type="entry name" value="HOMOCITRATE SYNTHASE-RELATED"/>
    <property type="match status" value="1"/>
</dbReference>
<dbReference type="Pfam" id="PF22617">
    <property type="entry name" value="HCS_D2"/>
    <property type="match status" value="1"/>
</dbReference>
<dbReference type="Pfam" id="PF00682">
    <property type="entry name" value="HMGL-like"/>
    <property type="match status" value="1"/>
</dbReference>
<dbReference type="Pfam" id="PF08502">
    <property type="entry name" value="LeuA_dimer"/>
    <property type="match status" value="1"/>
</dbReference>
<dbReference type="SMART" id="SM00917">
    <property type="entry name" value="LeuA_dimer"/>
    <property type="match status" value="1"/>
</dbReference>
<dbReference type="SUPFAM" id="SSF110921">
    <property type="entry name" value="2-isopropylmalate synthase LeuA, allosteric (dimerisation) domain"/>
    <property type="match status" value="1"/>
</dbReference>
<dbReference type="SUPFAM" id="SSF51569">
    <property type="entry name" value="Aldolase"/>
    <property type="match status" value="1"/>
</dbReference>
<dbReference type="PROSITE" id="PS00815">
    <property type="entry name" value="AIPM_HOMOCIT_SYNTH_1"/>
    <property type="match status" value="1"/>
</dbReference>
<dbReference type="PROSITE" id="PS00816">
    <property type="entry name" value="AIPM_HOMOCIT_SYNTH_2"/>
    <property type="match status" value="1"/>
</dbReference>
<dbReference type="PROSITE" id="PS50991">
    <property type="entry name" value="PYR_CT"/>
    <property type="match status" value="1"/>
</dbReference>
<organism>
    <name type="scientific">Yersinia enterocolitica serotype O:8 / biotype 1B (strain NCTC 13174 / 8081)</name>
    <dbReference type="NCBI Taxonomy" id="393305"/>
    <lineage>
        <taxon>Bacteria</taxon>
        <taxon>Pseudomonadati</taxon>
        <taxon>Pseudomonadota</taxon>
        <taxon>Gammaproteobacteria</taxon>
        <taxon>Enterobacterales</taxon>
        <taxon>Yersiniaceae</taxon>
        <taxon>Yersinia</taxon>
    </lineage>
</organism>
<proteinExistence type="inferred from homology"/>
<gene>
    <name evidence="1" type="primary">leuA</name>
    <name type="ordered locus">YE0654</name>
</gene>
<feature type="chain" id="PRO_1000149338" description="2-isopropylmalate synthase">
    <location>
        <begin position="1"/>
        <end position="520"/>
    </location>
</feature>
<feature type="domain" description="Pyruvate carboxyltransferase" evidence="1">
    <location>
        <begin position="5"/>
        <end position="267"/>
    </location>
</feature>
<feature type="region of interest" description="Regulatory domain" evidence="1">
    <location>
        <begin position="392"/>
        <end position="520"/>
    </location>
</feature>
<feature type="binding site" evidence="1">
    <location>
        <position position="14"/>
    </location>
    <ligand>
        <name>Mn(2+)</name>
        <dbReference type="ChEBI" id="CHEBI:29035"/>
    </ligand>
</feature>
<feature type="binding site" evidence="1">
    <location>
        <position position="202"/>
    </location>
    <ligand>
        <name>Mn(2+)</name>
        <dbReference type="ChEBI" id="CHEBI:29035"/>
    </ligand>
</feature>
<feature type="binding site" evidence="1">
    <location>
        <position position="204"/>
    </location>
    <ligand>
        <name>Mn(2+)</name>
        <dbReference type="ChEBI" id="CHEBI:29035"/>
    </ligand>
</feature>
<feature type="binding site" evidence="1">
    <location>
        <position position="238"/>
    </location>
    <ligand>
        <name>Mn(2+)</name>
        <dbReference type="ChEBI" id="CHEBI:29035"/>
    </ligand>
</feature>